<dbReference type="EC" id="3.6.5.3" evidence="2"/>
<dbReference type="EMBL" id="CR378663">
    <property type="protein sequence ID" value="CAG18755.1"/>
    <property type="molecule type" value="Genomic_DNA"/>
</dbReference>
<dbReference type="RefSeq" id="WP_011217126.1">
    <property type="nucleotide sequence ID" value="NC_006370.1"/>
</dbReference>
<dbReference type="SMR" id="Q6LVC0"/>
<dbReference type="STRING" id="298386.PBPRA0316"/>
<dbReference type="KEGG" id="ppr:PBPRA0316"/>
<dbReference type="eggNOG" id="COG0050">
    <property type="taxonomic scope" value="Bacteria"/>
</dbReference>
<dbReference type="HOGENOM" id="CLU_007265_0_1_6"/>
<dbReference type="Proteomes" id="UP000000593">
    <property type="component" value="Chromosome 1"/>
</dbReference>
<dbReference type="GO" id="GO:0005829">
    <property type="term" value="C:cytosol"/>
    <property type="evidence" value="ECO:0007669"/>
    <property type="project" value="TreeGrafter"/>
</dbReference>
<dbReference type="GO" id="GO:0005525">
    <property type="term" value="F:GTP binding"/>
    <property type="evidence" value="ECO:0007669"/>
    <property type="project" value="UniProtKB-UniRule"/>
</dbReference>
<dbReference type="GO" id="GO:0003924">
    <property type="term" value="F:GTPase activity"/>
    <property type="evidence" value="ECO:0007669"/>
    <property type="project" value="InterPro"/>
</dbReference>
<dbReference type="GO" id="GO:0097216">
    <property type="term" value="F:guanosine tetraphosphate binding"/>
    <property type="evidence" value="ECO:0007669"/>
    <property type="project" value="UniProtKB-ARBA"/>
</dbReference>
<dbReference type="GO" id="GO:0003746">
    <property type="term" value="F:translation elongation factor activity"/>
    <property type="evidence" value="ECO:0007669"/>
    <property type="project" value="UniProtKB-UniRule"/>
</dbReference>
<dbReference type="CDD" id="cd01884">
    <property type="entry name" value="EF_Tu"/>
    <property type="match status" value="1"/>
</dbReference>
<dbReference type="CDD" id="cd03697">
    <property type="entry name" value="EFTU_II"/>
    <property type="match status" value="1"/>
</dbReference>
<dbReference type="CDD" id="cd03707">
    <property type="entry name" value="EFTU_III"/>
    <property type="match status" value="1"/>
</dbReference>
<dbReference type="FunFam" id="2.40.30.10:FF:000001">
    <property type="entry name" value="Elongation factor Tu"/>
    <property type="match status" value="1"/>
</dbReference>
<dbReference type="FunFam" id="3.40.50.300:FF:000003">
    <property type="entry name" value="Elongation factor Tu"/>
    <property type="match status" value="1"/>
</dbReference>
<dbReference type="Gene3D" id="3.40.50.300">
    <property type="entry name" value="P-loop containing nucleotide triphosphate hydrolases"/>
    <property type="match status" value="1"/>
</dbReference>
<dbReference type="Gene3D" id="2.40.30.10">
    <property type="entry name" value="Translation factors"/>
    <property type="match status" value="2"/>
</dbReference>
<dbReference type="HAMAP" id="MF_00118_B">
    <property type="entry name" value="EF_Tu_B"/>
    <property type="match status" value="1"/>
</dbReference>
<dbReference type="InterPro" id="IPR041709">
    <property type="entry name" value="EF-Tu_GTP-bd"/>
</dbReference>
<dbReference type="InterPro" id="IPR050055">
    <property type="entry name" value="EF-Tu_GTPase"/>
</dbReference>
<dbReference type="InterPro" id="IPR004161">
    <property type="entry name" value="EFTu-like_2"/>
</dbReference>
<dbReference type="InterPro" id="IPR033720">
    <property type="entry name" value="EFTU_2"/>
</dbReference>
<dbReference type="InterPro" id="IPR031157">
    <property type="entry name" value="G_TR_CS"/>
</dbReference>
<dbReference type="InterPro" id="IPR027417">
    <property type="entry name" value="P-loop_NTPase"/>
</dbReference>
<dbReference type="InterPro" id="IPR005225">
    <property type="entry name" value="Small_GTP-bd"/>
</dbReference>
<dbReference type="InterPro" id="IPR000795">
    <property type="entry name" value="T_Tr_GTP-bd_dom"/>
</dbReference>
<dbReference type="InterPro" id="IPR009000">
    <property type="entry name" value="Transl_B-barrel_sf"/>
</dbReference>
<dbReference type="InterPro" id="IPR009001">
    <property type="entry name" value="Transl_elong_EF1A/Init_IF2_C"/>
</dbReference>
<dbReference type="InterPro" id="IPR004541">
    <property type="entry name" value="Transl_elong_EFTu/EF1A_bac/org"/>
</dbReference>
<dbReference type="InterPro" id="IPR004160">
    <property type="entry name" value="Transl_elong_EFTu/EF1A_C"/>
</dbReference>
<dbReference type="NCBIfam" id="TIGR00485">
    <property type="entry name" value="EF-Tu"/>
    <property type="match status" value="1"/>
</dbReference>
<dbReference type="NCBIfam" id="NF000766">
    <property type="entry name" value="PRK00049.1"/>
    <property type="match status" value="1"/>
</dbReference>
<dbReference type="NCBIfam" id="NF009372">
    <property type="entry name" value="PRK12735.1"/>
    <property type="match status" value="1"/>
</dbReference>
<dbReference type="NCBIfam" id="NF009373">
    <property type="entry name" value="PRK12736.1"/>
    <property type="match status" value="1"/>
</dbReference>
<dbReference type="NCBIfam" id="TIGR00231">
    <property type="entry name" value="small_GTP"/>
    <property type="match status" value="1"/>
</dbReference>
<dbReference type="PANTHER" id="PTHR43721:SF22">
    <property type="entry name" value="ELONGATION FACTOR TU, MITOCHONDRIAL"/>
    <property type="match status" value="1"/>
</dbReference>
<dbReference type="PANTHER" id="PTHR43721">
    <property type="entry name" value="ELONGATION FACTOR TU-RELATED"/>
    <property type="match status" value="1"/>
</dbReference>
<dbReference type="Pfam" id="PF00009">
    <property type="entry name" value="GTP_EFTU"/>
    <property type="match status" value="1"/>
</dbReference>
<dbReference type="Pfam" id="PF03144">
    <property type="entry name" value="GTP_EFTU_D2"/>
    <property type="match status" value="1"/>
</dbReference>
<dbReference type="Pfam" id="PF03143">
    <property type="entry name" value="GTP_EFTU_D3"/>
    <property type="match status" value="1"/>
</dbReference>
<dbReference type="PRINTS" id="PR00315">
    <property type="entry name" value="ELONGATNFCT"/>
</dbReference>
<dbReference type="SUPFAM" id="SSF50465">
    <property type="entry name" value="EF-Tu/eEF-1alpha/eIF2-gamma C-terminal domain"/>
    <property type="match status" value="1"/>
</dbReference>
<dbReference type="SUPFAM" id="SSF52540">
    <property type="entry name" value="P-loop containing nucleoside triphosphate hydrolases"/>
    <property type="match status" value="1"/>
</dbReference>
<dbReference type="SUPFAM" id="SSF50447">
    <property type="entry name" value="Translation proteins"/>
    <property type="match status" value="1"/>
</dbReference>
<dbReference type="PROSITE" id="PS00301">
    <property type="entry name" value="G_TR_1"/>
    <property type="match status" value="1"/>
</dbReference>
<dbReference type="PROSITE" id="PS51722">
    <property type="entry name" value="G_TR_2"/>
    <property type="match status" value="1"/>
</dbReference>
<accession>Q6LVC0</accession>
<gene>
    <name evidence="2" type="primary">tuf1</name>
    <name type="synonym">tufB</name>
    <name type="ordered locus">PBPRA0316</name>
</gene>
<protein>
    <recommendedName>
        <fullName evidence="2">Elongation factor Tu 1</fullName>
        <shortName evidence="2">EF-Tu 1</shortName>
        <ecNumber evidence="2">3.6.5.3</ecNumber>
    </recommendedName>
</protein>
<reference key="1">
    <citation type="journal article" date="2005" name="Science">
        <title>Life at depth: Photobacterium profundum genome sequence and expression analysis.</title>
        <authorList>
            <person name="Vezzi A."/>
            <person name="Campanaro S."/>
            <person name="D'Angelo M."/>
            <person name="Simonato F."/>
            <person name="Vitulo N."/>
            <person name="Lauro F.M."/>
            <person name="Cestaro A."/>
            <person name="Malacrida G."/>
            <person name="Simionati B."/>
            <person name="Cannata N."/>
            <person name="Romualdi C."/>
            <person name="Bartlett D.H."/>
            <person name="Valle G."/>
        </authorList>
    </citation>
    <scope>NUCLEOTIDE SEQUENCE [LARGE SCALE GENOMIC DNA]</scope>
    <source>
        <strain>ATCC BAA-1253 / SS9</strain>
    </source>
</reference>
<sequence>MSKEKFERLKPHVNVGTIGHVDHGKTTLTAAICTVLAKVYGGDAKDFASIDNAPEERERGITISTSHVEYDTPARHYAHVDCPGHADYVKNMITGAAQMDGGILVVAATDGPMPQTREHILLGRQVGIPYIIVFMNKCDMVDDEELLELVEMEVRELLSEYDFPGDDCPVIMGSALGALNGEAQWEEKIIELAEALDNYIPEPERAIDLPFILPIEDVFSIQGRGTVVTGRVEQGIVRVGEEVAIIGIKETTTTTCTGVEMFRKLLDEGRAGENVGVLLRGTKRDDVERGQVLAKPGSITPHTTFTSEIYVLSKDEGGRHTPFFKGYRPQFYFRTTDVTGTIELPEGVEMVMPGDNIAMTVTLIAPIAMDEGLRFAIREGGRTVGAGVVATIIA</sequence>
<feature type="chain" id="PRO_0000337460" description="Elongation factor Tu 1">
    <location>
        <begin position="1"/>
        <end position="394"/>
    </location>
</feature>
<feature type="domain" description="tr-type G">
    <location>
        <begin position="10"/>
        <end position="204"/>
    </location>
</feature>
<feature type="region of interest" description="G1" evidence="1">
    <location>
        <begin position="19"/>
        <end position="26"/>
    </location>
</feature>
<feature type="region of interest" description="G2" evidence="1">
    <location>
        <begin position="60"/>
        <end position="64"/>
    </location>
</feature>
<feature type="region of interest" description="G3" evidence="1">
    <location>
        <begin position="81"/>
        <end position="84"/>
    </location>
</feature>
<feature type="region of interest" description="G4" evidence="1">
    <location>
        <begin position="136"/>
        <end position="139"/>
    </location>
</feature>
<feature type="region of interest" description="G5" evidence="1">
    <location>
        <begin position="174"/>
        <end position="176"/>
    </location>
</feature>
<feature type="binding site" evidence="2">
    <location>
        <begin position="19"/>
        <end position="26"/>
    </location>
    <ligand>
        <name>GTP</name>
        <dbReference type="ChEBI" id="CHEBI:37565"/>
    </ligand>
</feature>
<feature type="binding site" evidence="2">
    <location>
        <position position="26"/>
    </location>
    <ligand>
        <name>Mg(2+)</name>
        <dbReference type="ChEBI" id="CHEBI:18420"/>
    </ligand>
</feature>
<feature type="binding site" evidence="2">
    <location>
        <begin position="81"/>
        <end position="85"/>
    </location>
    <ligand>
        <name>GTP</name>
        <dbReference type="ChEBI" id="CHEBI:37565"/>
    </ligand>
</feature>
<feature type="binding site" evidence="2">
    <location>
        <begin position="136"/>
        <end position="139"/>
    </location>
    <ligand>
        <name>GTP</name>
        <dbReference type="ChEBI" id="CHEBI:37565"/>
    </ligand>
</feature>
<comment type="function">
    <text evidence="2">GTP hydrolase that promotes the GTP-dependent binding of aminoacyl-tRNA to the A-site of ribosomes during protein biosynthesis.</text>
</comment>
<comment type="catalytic activity">
    <reaction evidence="2">
        <text>GTP + H2O = GDP + phosphate + H(+)</text>
        <dbReference type="Rhea" id="RHEA:19669"/>
        <dbReference type="ChEBI" id="CHEBI:15377"/>
        <dbReference type="ChEBI" id="CHEBI:15378"/>
        <dbReference type="ChEBI" id="CHEBI:37565"/>
        <dbReference type="ChEBI" id="CHEBI:43474"/>
        <dbReference type="ChEBI" id="CHEBI:58189"/>
        <dbReference type="EC" id="3.6.5.3"/>
    </reaction>
    <physiologicalReaction direction="left-to-right" evidence="2">
        <dbReference type="Rhea" id="RHEA:19670"/>
    </physiologicalReaction>
</comment>
<comment type="subunit">
    <text evidence="2">Monomer.</text>
</comment>
<comment type="subcellular location">
    <subcellularLocation>
        <location evidence="2">Cytoplasm</location>
    </subcellularLocation>
</comment>
<comment type="similarity">
    <text evidence="2">Belongs to the TRAFAC class translation factor GTPase superfamily. Classic translation factor GTPase family. EF-Tu/EF-1A subfamily.</text>
</comment>
<keyword id="KW-0963">Cytoplasm</keyword>
<keyword id="KW-0251">Elongation factor</keyword>
<keyword id="KW-0342">GTP-binding</keyword>
<keyword id="KW-0378">Hydrolase</keyword>
<keyword id="KW-0460">Magnesium</keyword>
<keyword id="KW-0479">Metal-binding</keyword>
<keyword id="KW-0547">Nucleotide-binding</keyword>
<keyword id="KW-0648">Protein biosynthesis</keyword>
<keyword id="KW-1185">Reference proteome</keyword>
<proteinExistence type="inferred from homology"/>
<organism>
    <name type="scientific">Photobacterium profundum (strain SS9)</name>
    <dbReference type="NCBI Taxonomy" id="298386"/>
    <lineage>
        <taxon>Bacteria</taxon>
        <taxon>Pseudomonadati</taxon>
        <taxon>Pseudomonadota</taxon>
        <taxon>Gammaproteobacteria</taxon>
        <taxon>Vibrionales</taxon>
        <taxon>Vibrionaceae</taxon>
        <taxon>Photobacterium</taxon>
    </lineage>
</organism>
<name>EFTU1_PHOPR</name>
<evidence type="ECO:0000250" key="1"/>
<evidence type="ECO:0000255" key="2">
    <source>
        <dbReference type="HAMAP-Rule" id="MF_00118"/>
    </source>
</evidence>